<protein>
    <recommendedName>
        <fullName>Carbohydrate-binding protein AWN</fullName>
    </recommendedName>
    <alternativeName>
        <fullName>Sperm-associated protein AWN</fullName>
    </alternativeName>
    <alternativeName>
        <fullName>Spermadhesin AWN</fullName>
    </alternativeName>
    <alternativeName>
        <fullName>Zona pellucida-binding protein AWN</fullName>
    </alternativeName>
</protein>
<name>AWN_PIG</name>
<feature type="signal peptide" evidence="2 3">
    <location>
        <begin position="1"/>
        <end position="20"/>
    </location>
</feature>
<feature type="chain" id="PRO_0000221456" description="Carbohydrate-binding protein AWN">
    <location>
        <begin position="21"/>
        <end position="153"/>
    </location>
</feature>
<feature type="domain" description="CUB" evidence="1">
    <location>
        <begin position="29"/>
        <end position="130"/>
    </location>
</feature>
<feature type="region of interest" description="Heparin-binding">
    <location>
        <begin position="93"/>
        <end position="130"/>
    </location>
</feature>
<feature type="modified residue" description="N-acetylalanine" evidence="2">
    <location>
        <position position="21"/>
    </location>
</feature>
<feature type="disulfide bond" evidence="1 2">
    <location>
        <begin position="29"/>
        <end position="50"/>
    </location>
</feature>
<feature type="disulfide bond" evidence="1 2">
    <location>
        <begin position="73"/>
        <end position="94"/>
    </location>
</feature>
<feature type="sequence conflict" description="In Ref. 2; AA sequence." evidence="4" ref="2">
    <original>Y</original>
    <variation>R</variation>
    <location>
        <position position="112"/>
    </location>
</feature>
<feature type="sequence conflict" description="In Ref. 2; AA sequence." evidence="4" ref="2">
    <original>Q</original>
    <variation>H</variation>
    <location>
        <position position="118"/>
    </location>
</feature>
<feature type="sequence conflict" description="In Ref. 2; AA sequence." evidence="4" ref="2">
    <original>Q</original>
    <variation>P</variation>
    <location>
        <position position="136"/>
    </location>
</feature>
<feature type="sequence conflict" description="In Ref. 2; AA sequence." evidence="4" ref="2">
    <original>D</original>
    <variation>E</variation>
    <location>
        <position position="141"/>
    </location>
</feature>
<proteinExistence type="evidence at protein level"/>
<comment type="function">
    <text>AWN proteins mediate the binding of boar spermatozoa to component(s) of the egg's zona pellucida by a carbohydrate-binding mechanism. Awn proteins are secretory components of the male accessory glands being coated to the sperm surface at the time of ejaculation. They possess as well heparin-, serine-protease-inhibitor-binding capability.</text>
</comment>
<comment type="subcellular location">
    <subcellularLocation>
        <location>Secreted</location>
    </subcellularLocation>
    <text>Predominantly localized on the membrane overlying the acrosomal cap region of the sperm head.</text>
</comment>
<comment type="PTM">
    <text>Partial N-acetylation differentiates isoforms AWN-1 (not acetylated) and AWN-2 (acetylated).</text>
</comment>
<comment type="similarity">
    <text evidence="4">Belongs to the spermadhesin family.</text>
</comment>
<sequence length="153" mass="16730">MKLAAPSLALLLSTATLVSGAWNRRSRSCGGVLRDPPGKIFNSDGPQKDCVWTIKVKPHFHVVLAIPPLNLSCGKEYVELLDGPPGSEIIGKICGGISLVFRSSSNIATIKYLRTSGQRASPFHIYYYADPEGPLQFPYFDRQTIIATEKNIP</sequence>
<organism>
    <name type="scientific">Sus scrofa</name>
    <name type="common">Pig</name>
    <dbReference type="NCBI Taxonomy" id="9823"/>
    <lineage>
        <taxon>Eukaryota</taxon>
        <taxon>Metazoa</taxon>
        <taxon>Chordata</taxon>
        <taxon>Craniata</taxon>
        <taxon>Vertebrata</taxon>
        <taxon>Euteleostomi</taxon>
        <taxon>Mammalia</taxon>
        <taxon>Eutheria</taxon>
        <taxon>Laurasiatheria</taxon>
        <taxon>Artiodactyla</taxon>
        <taxon>Suina</taxon>
        <taxon>Suidae</taxon>
        <taxon>Sus</taxon>
    </lineage>
</organism>
<keyword id="KW-0007">Acetylation</keyword>
<keyword id="KW-0903">Direct protein sequencing</keyword>
<keyword id="KW-1015">Disulfide bond</keyword>
<keyword id="KW-0278">Fertilization</keyword>
<keyword id="KW-0358">Heparin-binding</keyword>
<keyword id="KW-1185">Reference proteome</keyword>
<keyword id="KW-0964">Secreted</keyword>
<keyword id="KW-0732">Signal</keyword>
<evidence type="ECO:0000255" key="1">
    <source>
        <dbReference type="PROSITE-ProRule" id="PRU00059"/>
    </source>
</evidence>
<evidence type="ECO:0000269" key="2">
    <source>
    </source>
</evidence>
<evidence type="ECO:0000269" key="3">
    <source>
    </source>
</evidence>
<evidence type="ECO:0000305" key="4"/>
<reference key="1">
    <citation type="submission" date="1999-04" db="EMBL/GenBank/DDBJ databases">
        <authorList>
            <person name="Ekhlasi-Hundrieser M."/>
            <person name="Toepfer-Petersen E."/>
        </authorList>
    </citation>
    <scope>NUCLEOTIDE SEQUENCE [MRNA]</scope>
    <source>
        <tissue>Seminal vesicle</tissue>
    </source>
</reference>
<reference key="2">
    <citation type="journal article" date="1992" name="FEBS Lett.">
        <title>The complete primary structure of the spermadhesin AWN, a zona pellucida-binding protein isolated from boar spermatozoa.</title>
        <authorList>
            <person name="Sanz L."/>
            <person name="Calvete J.J."/>
            <person name="Mann K."/>
            <person name="Schaefer W."/>
            <person name="Schmid E.R."/>
            <person name="Amselgruber W."/>
            <person name="Sinowatz F."/>
            <person name="Ehrhard M."/>
            <person name="Toepfer-Petersen E."/>
        </authorList>
    </citation>
    <scope>PROTEIN SEQUENCE OF 21-153</scope>
    <scope>ACETYLATION AT ALA-21</scope>
    <scope>DISULFIDE BONDS</scope>
    <source>
        <tissue>Sperm</tissue>
    </source>
</reference>
<reference key="3">
    <citation type="journal article" date="1992" name="Biochim. Biophys. Acta">
        <title>Isolation and biochemical characterization of two isoforms of a boar sperm zona pellucida-binding protein.</title>
        <authorList>
            <person name="Sanz L."/>
            <person name="Calvete J.J."/>
            <person name="Schaefer W."/>
            <person name="Mann K."/>
            <person name="Toepfer-Petersen E."/>
        </authorList>
    </citation>
    <scope>PARTIAL PROTEIN SEQUENCE</scope>
    <source>
        <tissue>Sperm</tissue>
    </source>
</reference>
<reference key="4">
    <citation type="journal article" date="1996" name="FEBS Lett.">
        <title>Mapping the heparin-binding domain of boar spermadhesins.</title>
        <authorList>
            <person name="Calvete J.J."/>
            <person name="Dostalova Z."/>
            <person name="Sanz L."/>
            <person name="Adermann K."/>
            <person name="Thole H.H."/>
            <person name="Toepfer-Petersen E."/>
        </authorList>
    </citation>
    <scope>PROTEIN SEQUENCE OF 21-33; 42-52; 72-77; 94-107 AND 121-129</scope>
    <scope>IDENTIFICATION OF HEPARIN-BINDING DOMAIN</scope>
</reference>
<dbReference type="EMBL" id="AJ238538">
    <property type="protein sequence ID" value="CAB43872.1"/>
    <property type="molecule type" value="mRNA"/>
</dbReference>
<dbReference type="PIR" id="S21114">
    <property type="entry name" value="S21114"/>
</dbReference>
<dbReference type="RefSeq" id="NP_998994.1">
    <property type="nucleotide sequence ID" value="NM_213829.1"/>
</dbReference>
<dbReference type="SMR" id="P26776"/>
<dbReference type="BioGRID" id="1148934">
    <property type="interactions" value="1"/>
</dbReference>
<dbReference type="STRING" id="9823.ENSSSCP00000003227"/>
<dbReference type="iPTMnet" id="P26776"/>
<dbReference type="PaxDb" id="9823-ENSSSCP00000003227"/>
<dbReference type="GeneID" id="396783"/>
<dbReference type="CTD" id="396783"/>
<dbReference type="InParanoid" id="P26776"/>
<dbReference type="OrthoDB" id="9703031at2759"/>
<dbReference type="Proteomes" id="UP000008227">
    <property type="component" value="Unplaced"/>
</dbReference>
<dbReference type="Proteomes" id="UP000314985">
    <property type="component" value="Unplaced"/>
</dbReference>
<dbReference type="Proteomes" id="UP000694570">
    <property type="component" value="Unplaced"/>
</dbReference>
<dbReference type="Proteomes" id="UP000694571">
    <property type="component" value="Unplaced"/>
</dbReference>
<dbReference type="Proteomes" id="UP000694720">
    <property type="component" value="Unplaced"/>
</dbReference>
<dbReference type="Proteomes" id="UP000694722">
    <property type="component" value="Unplaced"/>
</dbReference>
<dbReference type="Proteomes" id="UP000694723">
    <property type="component" value="Unplaced"/>
</dbReference>
<dbReference type="Proteomes" id="UP000694724">
    <property type="component" value="Unplaced"/>
</dbReference>
<dbReference type="Proteomes" id="UP000694725">
    <property type="component" value="Unplaced"/>
</dbReference>
<dbReference type="Proteomes" id="UP000694726">
    <property type="component" value="Unplaced"/>
</dbReference>
<dbReference type="Proteomes" id="UP000694727">
    <property type="component" value="Unplaced"/>
</dbReference>
<dbReference type="Proteomes" id="UP000694728">
    <property type="component" value="Unplaced"/>
</dbReference>
<dbReference type="GO" id="GO:0005576">
    <property type="term" value="C:extracellular region"/>
    <property type="evidence" value="ECO:0007669"/>
    <property type="project" value="UniProtKB-SubCell"/>
</dbReference>
<dbReference type="GO" id="GO:0008201">
    <property type="term" value="F:heparin binding"/>
    <property type="evidence" value="ECO:0007669"/>
    <property type="project" value="UniProtKB-KW"/>
</dbReference>
<dbReference type="GO" id="GO:0007338">
    <property type="term" value="P:single fertilization"/>
    <property type="evidence" value="ECO:0007669"/>
    <property type="project" value="UniProtKB-KW"/>
</dbReference>
<dbReference type="CDD" id="cd00041">
    <property type="entry name" value="CUB"/>
    <property type="match status" value="1"/>
</dbReference>
<dbReference type="Gene3D" id="2.60.120.290">
    <property type="entry name" value="Spermadhesin, CUB domain"/>
    <property type="match status" value="1"/>
</dbReference>
<dbReference type="InterPro" id="IPR000859">
    <property type="entry name" value="CUB_dom"/>
</dbReference>
<dbReference type="InterPro" id="IPR035914">
    <property type="entry name" value="Sperma_CUB_dom_sf"/>
</dbReference>
<dbReference type="InterPro" id="IPR000124">
    <property type="entry name" value="Spermadhesin"/>
</dbReference>
<dbReference type="Pfam" id="PF00431">
    <property type="entry name" value="CUB"/>
    <property type="match status" value="1"/>
</dbReference>
<dbReference type="SMART" id="SM00042">
    <property type="entry name" value="CUB"/>
    <property type="match status" value="1"/>
</dbReference>
<dbReference type="SUPFAM" id="SSF49854">
    <property type="entry name" value="Spermadhesin, CUB domain"/>
    <property type="match status" value="1"/>
</dbReference>
<dbReference type="PROSITE" id="PS01180">
    <property type="entry name" value="CUB"/>
    <property type="match status" value="1"/>
</dbReference>
<dbReference type="PROSITE" id="PS00985">
    <property type="entry name" value="SPERMADHESIN_1"/>
    <property type="match status" value="1"/>
</dbReference>
<dbReference type="PROSITE" id="PS00986">
    <property type="entry name" value="SPERMADHESIN_2"/>
    <property type="match status" value="1"/>
</dbReference>
<accession>P26776</accession>
<accession>Q712L0</accession>